<keyword id="KW-1185">Reference proteome</keyword>
<proteinExistence type="evidence at protein level"/>
<evidence type="ECO:0000305" key="1"/>
<name>2003A_MYCTU</name>
<gene>
    <name evidence="1" type="ordered locus">Rv2003A</name>
</gene>
<accession>P0DMQ7</accession>
<dbReference type="EMBL" id="AL123456">
    <property type="status" value="NOT_ANNOTATED_CDS"/>
    <property type="molecule type" value="Genomic_DNA"/>
</dbReference>
<dbReference type="RefSeq" id="WP_003410051.1">
    <property type="nucleotide sequence ID" value="NZ_NVQJ01000043.1"/>
</dbReference>
<dbReference type="SMR" id="P0DMQ7"/>
<dbReference type="InParanoid" id="P0DMQ7"/>
<dbReference type="Proteomes" id="UP000001584">
    <property type="component" value="Chromosome"/>
</dbReference>
<dbReference type="GO" id="GO:0003824">
    <property type="term" value="F:catalytic activity"/>
    <property type="evidence" value="ECO:0007669"/>
    <property type="project" value="InterPro"/>
</dbReference>
<dbReference type="Gene3D" id="3.20.20.60">
    <property type="entry name" value="Phosphoenolpyruvate-binding domains"/>
    <property type="match status" value="1"/>
</dbReference>
<dbReference type="InterPro" id="IPR015813">
    <property type="entry name" value="Pyrv/PenolPyrv_kinase-like_dom"/>
</dbReference>
<dbReference type="InterPro" id="IPR040442">
    <property type="entry name" value="Pyrv_kinase-like_dom_sf"/>
</dbReference>
<dbReference type="SUPFAM" id="SSF51621">
    <property type="entry name" value="Phosphoenolpyruvate/pyruvate domain"/>
    <property type="match status" value="1"/>
</dbReference>
<sequence>MPTITVSSTSSLCGQALSGNPTFAEHLVRMGITSVSVHSGAIAATPGSVAAAERRLLLESARGDA</sequence>
<organism>
    <name type="scientific">Mycobacterium tuberculosis (strain ATCC 25618 / H37Rv)</name>
    <dbReference type="NCBI Taxonomy" id="83332"/>
    <lineage>
        <taxon>Bacteria</taxon>
        <taxon>Bacillati</taxon>
        <taxon>Actinomycetota</taxon>
        <taxon>Actinomycetes</taxon>
        <taxon>Mycobacteriales</taxon>
        <taxon>Mycobacteriaceae</taxon>
        <taxon>Mycobacterium</taxon>
        <taxon>Mycobacterium tuberculosis complex</taxon>
    </lineage>
</organism>
<protein>
    <recommendedName>
        <fullName evidence="1">Uncharacterized protein Rv2003A</fullName>
    </recommendedName>
</protein>
<feature type="chain" id="PRO_0000431252" description="Uncharacterized protein Rv2003A">
    <location>
        <begin position="1"/>
        <end position="65"/>
    </location>
</feature>
<reference key="1">
    <citation type="journal article" date="1998" name="Nature">
        <title>Deciphering the biology of Mycobacterium tuberculosis from the complete genome sequence.</title>
        <authorList>
            <person name="Cole S.T."/>
            <person name="Brosch R."/>
            <person name="Parkhill J."/>
            <person name="Garnier T."/>
            <person name="Churcher C.M."/>
            <person name="Harris D.E."/>
            <person name="Gordon S.V."/>
            <person name="Eiglmeier K."/>
            <person name="Gas S."/>
            <person name="Barry C.E. III"/>
            <person name="Tekaia F."/>
            <person name="Badcock K."/>
            <person name="Basham D."/>
            <person name="Brown D."/>
            <person name="Chillingworth T."/>
            <person name="Connor R."/>
            <person name="Davies R.M."/>
            <person name="Devlin K."/>
            <person name="Feltwell T."/>
            <person name="Gentles S."/>
            <person name="Hamlin N."/>
            <person name="Holroyd S."/>
            <person name="Hornsby T."/>
            <person name="Jagels K."/>
            <person name="Krogh A."/>
            <person name="McLean J."/>
            <person name="Moule S."/>
            <person name="Murphy L.D."/>
            <person name="Oliver S."/>
            <person name="Osborne J."/>
            <person name="Quail M.A."/>
            <person name="Rajandream M.A."/>
            <person name="Rogers J."/>
            <person name="Rutter S."/>
            <person name="Seeger K."/>
            <person name="Skelton S."/>
            <person name="Squares S."/>
            <person name="Squares R."/>
            <person name="Sulston J.E."/>
            <person name="Taylor K."/>
            <person name="Whitehead S."/>
            <person name="Barrell B.G."/>
        </authorList>
    </citation>
    <scope>NUCLEOTIDE SEQUENCE [LARGE SCALE GENOMIC DNA]</scope>
    <source>
        <strain>ATCC 25618 / H37Rv</strain>
    </source>
</reference>
<reference key="2">
    <citation type="journal article" date="2011" name="Mol. Cell. Proteomics">
        <title>Proteogenomic analysis of Mycobacterium tuberculosis by high resolution mass spectrometry.</title>
        <authorList>
            <person name="Kelkar D.S."/>
            <person name="Kumar D."/>
            <person name="Kumar P."/>
            <person name="Balakrishnan L."/>
            <person name="Muthusamy B."/>
            <person name="Yadav A.K."/>
            <person name="Shrivastava P."/>
            <person name="Marimuthu A."/>
            <person name="Anand S."/>
            <person name="Sundaram H."/>
            <person name="Kingsbury R."/>
            <person name="Harsha H.C."/>
            <person name="Nair B."/>
            <person name="Prasad T.S."/>
            <person name="Chauhan D.S."/>
            <person name="Katoch K."/>
            <person name="Katoch V.M."/>
            <person name="Kumar P."/>
            <person name="Chaerkady R."/>
            <person name="Ramachandran S."/>
            <person name="Dash D."/>
            <person name="Pandey A."/>
        </authorList>
    </citation>
    <scope>IDENTIFICATION BY MASS SPECTROMETRY [LARGE SCALE ANALYSIS]</scope>
    <source>
        <strain>ATCC 25618 / H37Rv</strain>
    </source>
</reference>